<keyword id="KW-0479">Metal-binding</keyword>
<keyword id="KW-0521">NADP</keyword>
<keyword id="KW-0560">Oxidoreductase</keyword>
<keyword id="KW-0630">Potassium</keyword>
<name>GUAC_VIBC3</name>
<sequence length="347" mass="37114">MRIEQELKLGFKDVLFRPKRSTLKSRSQVNLTREFTFKHSGRQWSGVPVIAANMDSVGSFAMAKALAEHGVMTAVHKHYTVADWAEFVKSADKATLNNVMVSTGTSEADFQKTKDVMALSDELIFICIDIANGYSEHLVEYVQRVRAAFPDKVISAGNVVTGDMVEELILAGADIVKVGIGPGSVCTTRVKTGVGYPQLSAIIECADAAHGLGGRIIGDGGCTCPGDVAKAFGGGADFVMLGGMLAGHEEAGGELIVKDGETFMKFYGMSSKSAMDKHSGGVAGYRAAEGKTVLLPYRGSVHGTIQDILGGVRSTCTYVGAAELRELTKRTTFIRVQEQENNVYGRE</sequence>
<evidence type="ECO:0000255" key="1">
    <source>
        <dbReference type="HAMAP-Rule" id="MF_00596"/>
    </source>
</evidence>
<comment type="function">
    <text evidence="1">Catalyzes the irreversible NADPH-dependent deamination of GMP to IMP. It functions in the conversion of nucleobase, nucleoside and nucleotide derivatives of G to A nucleotides, and in maintaining the intracellular balance of A and G nucleotides.</text>
</comment>
<comment type="catalytic activity">
    <reaction evidence="1">
        <text>IMP + NH4(+) + NADP(+) = GMP + NADPH + 2 H(+)</text>
        <dbReference type="Rhea" id="RHEA:17185"/>
        <dbReference type="ChEBI" id="CHEBI:15378"/>
        <dbReference type="ChEBI" id="CHEBI:28938"/>
        <dbReference type="ChEBI" id="CHEBI:57783"/>
        <dbReference type="ChEBI" id="CHEBI:58053"/>
        <dbReference type="ChEBI" id="CHEBI:58115"/>
        <dbReference type="ChEBI" id="CHEBI:58349"/>
        <dbReference type="EC" id="1.7.1.7"/>
    </reaction>
</comment>
<comment type="subunit">
    <text evidence="1">Homotetramer.</text>
</comment>
<comment type="similarity">
    <text evidence="1">Belongs to the IMPDH/GMPR family. GuaC type 1 subfamily.</text>
</comment>
<reference key="1">
    <citation type="submission" date="2007-03" db="EMBL/GenBank/DDBJ databases">
        <authorList>
            <person name="Heidelberg J."/>
        </authorList>
    </citation>
    <scope>NUCLEOTIDE SEQUENCE [LARGE SCALE GENOMIC DNA]</scope>
    <source>
        <strain>ATCC 39541 / Classical Ogawa 395 / O395</strain>
    </source>
</reference>
<reference key="2">
    <citation type="journal article" date="2008" name="PLoS ONE">
        <title>A recalibrated molecular clock and independent origins for the cholera pandemic clones.</title>
        <authorList>
            <person name="Feng L."/>
            <person name="Reeves P.R."/>
            <person name="Lan R."/>
            <person name="Ren Y."/>
            <person name="Gao C."/>
            <person name="Zhou Z."/>
            <person name="Ren Y."/>
            <person name="Cheng J."/>
            <person name="Wang W."/>
            <person name="Wang J."/>
            <person name="Qian W."/>
            <person name="Li D."/>
            <person name="Wang L."/>
        </authorList>
    </citation>
    <scope>NUCLEOTIDE SEQUENCE [LARGE SCALE GENOMIC DNA]</scope>
    <source>
        <strain>ATCC 39541 / Classical Ogawa 395 / O395</strain>
    </source>
</reference>
<proteinExistence type="inferred from homology"/>
<protein>
    <recommendedName>
        <fullName evidence="1">GMP reductase</fullName>
        <ecNumber evidence="1">1.7.1.7</ecNumber>
    </recommendedName>
    <alternativeName>
        <fullName evidence="1">Guanosine 5'-monophosphate oxidoreductase</fullName>
        <shortName evidence="1">Guanosine monophosphate reductase</shortName>
    </alternativeName>
</protein>
<organism>
    <name type="scientific">Vibrio cholerae serotype O1 (strain ATCC 39541 / Classical Ogawa 395 / O395)</name>
    <dbReference type="NCBI Taxonomy" id="345073"/>
    <lineage>
        <taxon>Bacteria</taxon>
        <taxon>Pseudomonadati</taxon>
        <taxon>Pseudomonadota</taxon>
        <taxon>Gammaproteobacteria</taxon>
        <taxon>Vibrionales</taxon>
        <taxon>Vibrionaceae</taxon>
        <taxon>Vibrio</taxon>
    </lineage>
</organism>
<accession>A5EYL9</accession>
<accession>C3M7N5</accession>
<dbReference type="EC" id="1.7.1.7" evidence="1"/>
<dbReference type="EMBL" id="CP000626">
    <property type="protein sequence ID" value="ABQ19258.1"/>
    <property type="molecule type" value="Genomic_DNA"/>
</dbReference>
<dbReference type="EMBL" id="CP001236">
    <property type="protein sequence ID" value="ACP11031.1"/>
    <property type="molecule type" value="Genomic_DNA"/>
</dbReference>
<dbReference type="RefSeq" id="WP_001217709.1">
    <property type="nucleotide sequence ID" value="NZ_JAACZH010000004.1"/>
</dbReference>
<dbReference type="SMR" id="A5EYL9"/>
<dbReference type="KEGG" id="vco:VC0395_1080"/>
<dbReference type="KEGG" id="vcr:VC395_A0188"/>
<dbReference type="PATRIC" id="fig|345073.21.peg.2948"/>
<dbReference type="eggNOG" id="COG0516">
    <property type="taxonomic scope" value="Bacteria"/>
</dbReference>
<dbReference type="HOGENOM" id="CLU_022552_5_3_6"/>
<dbReference type="OrthoDB" id="9805398at2"/>
<dbReference type="Proteomes" id="UP000000249">
    <property type="component" value="Chromosome 1"/>
</dbReference>
<dbReference type="GO" id="GO:0005829">
    <property type="term" value="C:cytosol"/>
    <property type="evidence" value="ECO:0007669"/>
    <property type="project" value="TreeGrafter"/>
</dbReference>
<dbReference type="GO" id="GO:1902560">
    <property type="term" value="C:GMP reductase complex"/>
    <property type="evidence" value="ECO:0007669"/>
    <property type="project" value="InterPro"/>
</dbReference>
<dbReference type="GO" id="GO:0003920">
    <property type="term" value="F:GMP reductase activity"/>
    <property type="evidence" value="ECO:0007669"/>
    <property type="project" value="UniProtKB-UniRule"/>
</dbReference>
<dbReference type="GO" id="GO:0046872">
    <property type="term" value="F:metal ion binding"/>
    <property type="evidence" value="ECO:0007669"/>
    <property type="project" value="UniProtKB-KW"/>
</dbReference>
<dbReference type="GO" id="GO:0006163">
    <property type="term" value="P:purine nucleotide metabolic process"/>
    <property type="evidence" value="ECO:0007669"/>
    <property type="project" value="UniProtKB-UniRule"/>
</dbReference>
<dbReference type="CDD" id="cd00381">
    <property type="entry name" value="IMPDH"/>
    <property type="match status" value="1"/>
</dbReference>
<dbReference type="FunFam" id="3.20.20.70:FF:000012">
    <property type="entry name" value="GMP reductase"/>
    <property type="match status" value="1"/>
</dbReference>
<dbReference type="Gene3D" id="3.20.20.70">
    <property type="entry name" value="Aldolase class I"/>
    <property type="match status" value="1"/>
</dbReference>
<dbReference type="HAMAP" id="MF_00596">
    <property type="entry name" value="GMP_reduct_type1"/>
    <property type="match status" value="1"/>
</dbReference>
<dbReference type="InterPro" id="IPR013785">
    <property type="entry name" value="Aldolase_TIM"/>
</dbReference>
<dbReference type="InterPro" id="IPR050139">
    <property type="entry name" value="GMP_reductase"/>
</dbReference>
<dbReference type="InterPro" id="IPR005993">
    <property type="entry name" value="GMPR"/>
</dbReference>
<dbReference type="InterPro" id="IPR015875">
    <property type="entry name" value="IMP_DH/GMP_Rdtase_CS"/>
</dbReference>
<dbReference type="InterPro" id="IPR001093">
    <property type="entry name" value="IMP_DH_GMPRt"/>
</dbReference>
<dbReference type="NCBIfam" id="TIGR01305">
    <property type="entry name" value="GMP_reduct_1"/>
    <property type="match status" value="1"/>
</dbReference>
<dbReference type="NCBIfam" id="NF003470">
    <property type="entry name" value="PRK05096.1"/>
    <property type="match status" value="1"/>
</dbReference>
<dbReference type="PANTHER" id="PTHR43170">
    <property type="entry name" value="GMP REDUCTASE"/>
    <property type="match status" value="1"/>
</dbReference>
<dbReference type="PANTHER" id="PTHR43170:SF5">
    <property type="entry name" value="GMP REDUCTASE"/>
    <property type="match status" value="1"/>
</dbReference>
<dbReference type="Pfam" id="PF00478">
    <property type="entry name" value="IMPDH"/>
    <property type="match status" value="1"/>
</dbReference>
<dbReference type="PIRSF" id="PIRSF000235">
    <property type="entry name" value="GMP_reductase"/>
    <property type="match status" value="1"/>
</dbReference>
<dbReference type="SMART" id="SM01240">
    <property type="entry name" value="IMPDH"/>
    <property type="match status" value="1"/>
</dbReference>
<dbReference type="SUPFAM" id="SSF51412">
    <property type="entry name" value="Inosine monophosphate dehydrogenase (IMPDH)"/>
    <property type="match status" value="1"/>
</dbReference>
<dbReference type="PROSITE" id="PS00487">
    <property type="entry name" value="IMP_DH_GMP_RED"/>
    <property type="match status" value="1"/>
</dbReference>
<feature type="chain" id="PRO_1000072625" description="GMP reductase">
    <location>
        <begin position="1"/>
        <end position="347"/>
    </location>
</feature>
<feature type="active site" description="Thioimidate intermediate" evidence="1">
    <location>
        <position position="186"/>
    </location>
</feature>
<feature type="binding site" evidence="1">
    <location>
        <begin position="108"/>
        <end position="131"/>
    </location>
    <ligand>
        <name>NADP(+)</name>
        <dbReference type="ChEBI" id="CHEBI:58349"/>
    </ligand>
</feature>
<feature type="binding site" evidence="1">
    <location>
        <position position="181"/>
    </location>
    <ligand>
        <name>K(+)</name>
        <dbReference type="ChEBI" id="CHEBI:29103"/>
    </ligand>
</feature>
<feature type="binding site" evidence="1">
    <location>
        <position position="183"/>
    </location>
    <ligand>
        <name>K(+)</name>
        <dbReference type="ChEBI" id="CHEBI:29103"/>
    </ligand>
</feature>
<feature type="binding site" evidence="1">
    <location>
        <begin position="216"/>
        <end position="239"/>
    </location>
    <ligand>
        <name>NADP(+)</name>
        <dbReference type="ChEBI" id="CHEBI:58349"/>
    </ligand>
</feature>
<gene>
    <name evidence="1" type="primary">guaC</name>
    <name type="ordered locus">VC0395_1080</name>
    <name type="ordered locus">VC395_A0188</name>
</gene>